<feature type="chain" id="PRO_0000093783" description="Uncharacterized oxidoreductase Mb3444c">
    <location>
        <begin position="1"/>
        <end position="375"/>
    </location>
</feature>
<comment type="similarity">
    <text evidence="1">Belongs to the IMPDH/GMPR family.</text>
</comment>
<name>Y3444_MYCBO</name>
<protein>
    <recommendedName>
        <fullName>Uncharacterized oxidoreductase Mb3444c</fullName>
        <ecNumber>1.-.-.-</ecNumber>
    </recommendedName>
</protein>
<evidence type="ECO:0000305" key="1"/>
<reference key="1">
    <citation type="journal article" date="2003" name="Proc. Natl. Acad. Sci. U.S.A.">
        <title>The complete genome sequence of Mycobacterium bovis.</title>
        <authorList>
            <person name="Garnier T."/>
            <person name="Eiglmeier K."/>
            <person name="Camus J.-C."/>
            <person name="Medina N."/>
            <person name="Mansoor H."/>
            <person name="Pryor M."/>
            <person name="Duthoy S."/>
            <person name="Grondin S."/>
            <person name="Lacroix C."/>
            <person name="Monsempe C."/>
            <person name="Simon S."/>
            <person name="Harris B."/>
            <person name="Atkin R."/>
            <person name="Doggett J."/>
            <person name="Mayes R."/>
            <person name="Keating L."/>
            <person name="Wheeler P.R."/>
            <person name="Parkhill J."/>
            <person name="Barrell B.G."/>
            <person name="Cole S.T."/>
            <person name="Gordon S.V."/>
            <person name="Hewinson R.G."/>
        </authorList>
    </citation>
    <scope>NUCLEOTIDE SEQUENCE [LARGE SCALE GENOMIC DNA]</scope>
    <source>
        <strain>ATCC BAA-935 / AF2122/97</strain>
    </source>
</reference>
<reference key="2">
    <citation type="journal article" date="2017" name="Genome Announc.">
        <title>Updated reference genome sequence and annotation of Mycobacterium bovis AF2122/97.</title>
        <authorList>
            <person name="Malone K.M."/>
            <person name="Farrell D."/>
            <person name="Stuber T.P."/>
            <person name="Schubert O.T."/>
            <person name="Aebersold R."/>
            <person name="Robbe-Austerman S."/>
            <person name="Gordon S.V."/>
        </authorList>
    </citation>
    <scope>NUCLEOTIDE SEQUENCE [LARGE SCALE GENOMIC DNA]</scope>
    <scope>GENOME REANNOTATION</scope>
    <source>
        <strain>ATCC BAA-935 / AF2122/97</strain>
    </source>
</reference>
<organism>
    <name type="scientific">Mycobacterium bovis (strain ATCC BAA-935 / AF2122/97)</name>
    <dbReference type="NCBI Taxonomy" id="233413"/>
    <lineage>
        <taxon>Bacteria</taxon>
        <taxon>Bacillati</taxon>
        <taxon>Actinomycetota</taxon>
        <taxon>Actinomycetes</taxon>
        <taxon>Mycobacteriales</taxon>
        <taxon>Mycobacteriaceae</taxon>
        <taxon>Mycobacterium</taxon>
        <taxon>Mycobacterium tuberculosis complex</taxon>
    </lineage>
</organism>
<proteinExistence type="inferred from homology"/>
<dbReference type="EC" id="1.-.-.-"/>
<dbReference type="EMBL" id="LT708304">
    <property type="protein sequence ID" value="SIU02072.1"/>
    <property type="molecule type" value="Genomic_DNA"/>
</dbReference>
<dbReference type="RefSeq" id="NP_857084.1">
    <property type="nucleotide sequence ID" value="NC_002945.3"/>
</dbReference>
<dbReference type="RefSeq" id="WP_003418005.1">
    <property type="nucleotide sequence ID" value="NC_002945.4"/>
</dbReference>
<dbReference type="SMR" id="P65171"/>
<dbReference type="KEGG" id="mbo:BQ2027_MB3444C"/>
<dbReference type="PATRIC" id="fig|233413.5.peg.3779"/>
<dbReference type="Proteomes" id="UP000001419">
    <property type="component" value="Chromosome"/>
</dbReference>
<dbReference type="GO" id="GO:0003938">
    <property type="term" value="F:IMP dehydrogenase activity"/>
    <property type="evidence" value="ECO:0007669"/>
    <property type="project" value="InterPro"/>
</dbReference>
<dbReference type="GO" id="GO:0006183">
    <property type="term" value="P:GTP biosynthetic process"/>
    <property type="evidence" value="ECO:0007669"/>
    <property type="project" value="TreeGrafter"/>
</dbReference>
<dbReference type="FunFam" id="3.20.20.70:FF:000060">
    <property type="entry name" value="IMP dehydrogenase subunit"/>
    <property type="match status" value="1"/>
</dbReference>
<dbReference type="Gene3D" id="3.20.20.70">
    <property type="entry name" value="Aldolase class I"/>
    <property type="match status" value="1"/>
</dbReference>
<dbReference type="InterPro" id="IPR013785">
    <property type="entry name" value="Aldolase_TIM"/>
</dbReference>
<dbReference type="InterPro" id="IPR005990">
    <property type="entry name" value="IMP_DH"/>
</dbReference>
<dbReference type="InterPro" id="IPR005992">
    <property type="entry name" value="IMP_DH-rel2"/>
</dbReference>
<dbReference type="InterPro" id="IPR001093">
    <property type="entry name" value="IMP_DH_GMPRt"/>
</dbReference>
<dbReference type="NCBIfam" id="TIGR01304">
    <property type="entry name" value="IMP_DH_rel_2"/>
    <property type="match status" value="1"/>
</dbReference>
<dbReference type="PANTHER" id="PTHR11911:SF111">
    <property type="entry name" value="INOSINE-5'-MONOPHOSPHATE DEHYDROGENASE"/>
    <property type="match status" value="1"/>
</dbReference>
<dbReference type="PANTHER" id="PTHR11911">
    <property type="entry name" value="INOSINE-5-MONOPHOSPHATE DEHYDROGENASE RELATED"/>
    <property type="match status" value="1"/>
</dbReference>
<dbReference type="Pfam" id="PF00478">
    <property type="entry name" value="IMPDH"/>
    <property type="match status" value="1"/>
</dbReference>
<dbReference type="SMART" id="SM01240">
    <property type="entry name" value="IMPDH"/>
    <property type="match status" value="1"/>
</dbReference>
<dbReference type="SUPFAM" id="SSF51412">
    <property type="entry name" value="Inosine monophosphate dehydrogenase (IMPDH)"/>
    <property type="match status" value="1"/>
</dbReference>
<accession>P65171</accession>
<accession>A0A1R3Y439</accession>
<accession>Q50716</accession>
<accession>X2BNX6</accession>
<gene>
    <name type="ordered locus">BQ2027_MB3444C</name>
</gene>
<keyword id="KW-0520">NAD</keyword>
<keyword id="KW-0560">Oxidoreductase</keyword>
<keyword id="KW-1185">Reference proteome</keyword>
<sequence length="375" mass="38991">MVEIGMGRTARRTYELSEISIVPSRRTRSSKDVSTAWQLDAYRFEIPVVAHPTDALVSPEFAIELGRLGGLGVLNGEGLIGRHLDVEAKIAQLLEAAAADPEPSTAIRLLQELHAAPLNPDLLGAAVARIREAGVTTAVRVSPQNAQWLTPVLVAAGIDLLVIQGTIVSAERVASDGEPLNLKTFISELDIPVVAGGVLDHRTALHLMRTGAAGVIVGYGSTQGVTTTDEVLGISVPMATAIADAAAARRDYLDETGGRYVHVLADGDIHTSGELAKAIACGADAVVLGTPLAESAEALGEGWFWPAAAAHPSLPRGALLQIAVGERPPLARVLGGPSDDPFGGLNLVGGLRRSMAKAGYCDLKEFQKVGLTVGG</sequence>